<gene>
    <name evidence="1" type="primary">era</name>
    <name type="ordered locus">CbuG_0507</name>
</gene>
<dbReference type="EMBL" id="CP001019">
    <property type="protein sequence ID" value="ACJ17928.1"/>
    <property type="molecule type" value="Genomic_DNA"/>
</dbReference>
<dbReference type="RefSeq" id="WP_012569799.1">
    <property type="nucleotide sequence ID" value="NC_011527.1"/>
</dbReference>
<dbReference type="SMR" id="B6IZ00"/>
<dbReference type="KEGG" id="cbg:CbuG_0507"/>
<dbReference type="HOGENOM" id="CLU_038009_1_2_6"/>
<dbReference type="GO" id="GO:0005829">
    <property type="term" value="C:cytosol"/>
    <property type="evidence" value="ECO:0007669"/>
    <property type="project" value="TreeGrafter"/>
</dbReference>
<dbReference type="GO" id="GO:0005886">
    <property type="term" value="C:plasma membrane"/>
    <property type="evidence" value="ECO:0007669"/>
    <property type="project" value="UniProtKB-SubCell"/>
</dbReference>
<dbReference type="GO" id="GO:0005525">
    <property type="term" value="F:GTP binding"/>
    <property type="evidence" value="ECO:0007669"/>
    <property type="project" value="UniProtKB-UniRule"/>
</dbReference>
<dbReference type="GO" id="GO:0003924">
    <property type="term" value="F:GTPase activity"/>
    <property type="evidence" value="ECO:0007669"/>
    <property type="project" value="UniProtKB-UniRule"/>
</dbReference>
<dbReference type="GO" id="GO:0043024">
    <property type="term" value="F:ribosomal small subunit binding"/>
    <property type="evidence" value="ECO:0007669"/>
    <property type="project" value="TreeGrafter"/>
</dbReference>
<dbReference type="GO" id="GO:0070181">
    <property type="term" value="F:small ribosomal subunit rRNA binding"/>
    <property type="evidence" value="ECO:0007669"/>
    <property type="project" value="UniProtKB-UniRule"/>
</dbReference>
<dbReference type="GO" id="GO:0000028">
    <property type="term" value="P:ribosomal small subunit assembly"/>
    <property type="evidence" value="ECO:0007669"/>
    <property type="project" value="TreeGrafter"/>
</dbReference>
<dbReference type="CDD" id="cd04163">
    <property type="entry name" value="Era"/>
    <property type="match status" value="1"/>
</dbReference>
<dbReference type="CDD" id="cd22534">
    <property type="entry name" value="KH-II_Era"/>
    <property type="match status" value="1"/>
</dbReference>
<dbReference type="FunFam" id="3.30.300.20:FF:000003">
    <property type="entry name" value="GTPase Era"/>
    <property type="match status" value="1"/>
</dbReference>
<dbReference type="FunFam" id="3.40.50.300:FF:000094">
    <property type="entry name" value="GTPase Era"/>
    <property type="match status" value="1"/>
</dbReference>
<dbReference type="Gene3D" id="3.30.300.20">
    <property type="match status" value="1"/>
</dbReference>
<dbReference type="Gene3D" id="3.40.50.300">
    <property type="entry name" value="P-loop containing nucleotide triphosphate hydrolases"/>
    <property type="match status" value="1"/>
</dbReference>
<dbReference type="HAMAP" id="MF_00367">
    <property type="entry name" value="GTPase_Era"/>
    <property type="match status" value="1"/>
</dbReference>
<dbReference type="InterPro" id="IPR030388">
    <property type="entry name" value="G_ERA_dom"/>
</dbReference>
<dbReference type="InterPro" id="IPR006073">
    <property type="entry name" value="GTP-bd"/>
</dbReference>
<dbReference type="InterPro" id="IPR005662">
    <property type="entry name" value="GTPase_Era-like"/>
</dbReference>
<dbReference type="InterPro" id="IPR015946">
    <property type="entry name" value="KH_dom-like_a/b"/>
</dbReference>
<dbReference type="InterPro" id="IPR004044">
    <property type="entry name" value="KH_dom_type_2"/>
</dbReference>
<dbReference type="InterPro" id="IPR009019">
    <property type="entry name" value="KH_sf_prok-type"/>
</dbReference>
<dbReference type="InterPro" id="IPR027417">
    <property type="entry name" value="P-loop_NTPase"/>
</dbReference>
<dbReference type="InterPro" id="IPR005225">
    <property type="entry name" value="Small_GTP-bd"/>
</dbReference>
<dbReference type="NCBIfam" id="TIGR00436">
    <property type="entry name" value="era"/>
    <property type="match status" value="1"/>
</dbReference>
<dbReference type="NCBIfam" id="NF000908">
    <property type="entry name" value="PRK00089.1"/>
    <property type="match status" value="1"/>
</dbReference>
<dbReference type="NCBIfam" id="TIGR00231">
    <property type="entry name" value="small_GTP"/>
    <property type="match status" value="1"/>
</dbReference>
<dbReference type="PANTHER" id="PTHR42698">
    <property type="entry name" value="GTPASE ERA"/>
    <property type="match status" value="1"/>
</dbReference>
<dbReference type="PANTHER" id="PTHR42698:SF1">
    <property type="entry name" value="GTPASE ERA, MITOCHONDRIAL"/>
    <property type="match status" value="1"/>
</dbReference>
<dbReference type="Pfam" id="PF07650">
    <property type="entry name" value="KH_2"/>
    <property type="match status" value="1"/>
</dbReference>
<dbReference type="Pfam" id="PF01926">
    <property type="entry name" value="MMR_HSR1"/>
    <property type="match status" value="1"/>
</dbReference>
<dbReference type="PRINTS" id="PR00326">
    <property type="entry name" value="GTP1OBG"/>
</dbReference>
<dbReference type="SUPFAM" id="SSF52540">
    <property type="entry name" value="P-loop containing nucleoside triphosphate hydrolases"/>
    <property type="match status" value="1"/>
</dbReference>
<dbReference type="SUPFAM" id="SSF54814">
    <property type="entry name" value="Prokaryotic type KH domain (KH-domain type II)"/>
    <property type="match status" value="1"/>
</dbReference>
<dbReference type="PROSITE" id="PS51713">
    <property type="entry name" value="G_ERA"/>
    <property type="match status" value="1"/>
</dbReference>
<dbReference type="PROSITE" id="PS50823">
    <property type="entry name" value="KH_TYPE_2"/>
    <property type="match status" value="1"/>
</dbReference>
<keyword id="KW-0997">Cell inner membrane</keyword>
<keyword id="KW-1003">Cell membrane</keyword>
<keyword id="KW-0963">Cytoplasm</keyword>
<keyword id="KW-0342">GTP-binding</keyword>
<keyword id="KW-0472">Membrane</keyword>
<keyword id="KW-0547">Nucleotide-binding</keyword>
<keyword id="KW-0690">Ribosome biogenesis</keyword>
<keyword id="KW-0694">RNA-binding</keyword>
<keyword id="KW-0699">rRNA-binding</keyword>
<organism>
    <name type="scientific">Coxiella burnetii (strain CbuG_Q212)</name>
    <name type="common">Coxiella burnetii (strain Q212)</name>
    <dbReference type="NCBI Taxonomy" id="434923"/>
    <lineage>
        <taxon>Bacteria</taxon>
        <taxon>Pseudomonadati</taxon>
        <taxon>Pseudomonadota</taxon>
        <taxon>Gammaproteobacteria</taxon>
        <taxon>Legionellales</taxon>
        <taxon>Coxiellaceae</taxon>
        <taxon>Coxiella</taxon>
    </lineage>
</organism>
<name>ERA_COXB2</name>
<feature type="chain" id="PRO_1000121315" description="GTPase Era">
    <location>
        <begin position="1"/>
        <end position="295"/>
    </location>
</feature>
<feature type="domain" description="Era-type G" evidence="2">
    <location>
        <begin position="5"/>
        <end position="172"/>
    </location>
</feature>
<feature type="domain" description="KH type-2" evidence="1">
    <location>
        <begin position="203"/>
        <end position="279"/>
    </location>
</feature>
<feature type="region of interest" description="G1" evidence="2">
    <location>
        <begin position="13"/>
        <end position="20"/>
    </location>
</feature>
<feature type="region of interest" description="G2" evidence="2">
    <location>
        <begin position="39"/>
        <end position="43"/>
    </location>
</feature>
<feature type="region of interest" description="G3" evidence="2">
    <location>
        <begin position="60"/>
        <end position="63"/>
    </location>
</feature>
<feature type="region of interest" description="G4" evidence="2">
    <location>
        <begin position="121"/>
        <end position="124"/>
    </location>
</feature>
<feature type="region of interest" description="G5" evidence="2">
    <location>
        <begin position="151"/>
        <end position="153"/>
    </location>
</feature>
<feature type="binding site" evidence="1">
    <location>
        <begin position="13"/>
        <end position="20"/>
    </location>
    <ligand>
        <name>GTP</name>
        <dbReference type="ChEBI" id="CHEBI:37565"/>
    </ligand>
</feature>
<feature type="binding site" evidence="1">
    <location>
        <begin position="60"/>
        <end position="64"/>
    </location>
    <ligand>
        <name>GTP</name>
        <dbReference type="ChEBI" id="CHEBI:37565"/>
    </ligand>
</feature>
<feature type="binding site" evidence="1">
    <location>
        <begin position="121"/>
        <end position="124"/>
    </location>
    <ligand>
        <name>GTP</name>
        <dbReference type="ChEBI" id="CHEBI:37565"/>
    </ligand>
</feature>
<protein>
    <recommendedName>
        <fullName evidence="1">GTPase Era</fullName>
    </recommendedName>
</protein>
<reference key="1">
    <citation type="journal article" date="2009" name="Infect. Immun.">
        <title>Comparative genomics reveal extensive transposon-mediated genomic plasticity and diversity among potential effector proteins within the genus Coxiella.</title>
        <authorList>
            <person name="Beare P.A."/>
            <person name="Unsworth N."/>
            <person name="Andoh M."/>
            <person name="Voth D.E."/>
            <person name="Omsland A."/>
            <person name="Gilk S.D."/>
            <person name="Williams K.P."/>
            <person name="Sobral B.W."/>
            <person name="Kupko J.J. III"/>
            <person name="Porcella S.F."/>
            <person name="Samuel J.E."/>
            <person name="Heinzen R.A."/>
        </authorList>
    </citation>
    <scope>NUCLEOTIDE SEQUENCE [LARGE SCALE GENOMIC DNA]</scope>
    <source>
        <strain>CbuG_Q212</strain>
    </source>
</reference>
<accession>B6IZ00</accession>
<comment type="function">
    <text evidence="1">An essential GTPase that binds both GDP and GTP, with rapid nucleotide exchange. Plays a role in 16S rRNA processing and 30S ribosomal subunit biogenesis and possibly also in cell cycle regulation and energy metabolism.</text>
</comment>
<comment type="subunit">
    <text evidence="1">Monomer.</text>
</comment>
<comment type="subcellular location">
    <subcellularLocation>
        <location>Cytoplasm</location>
    </subcellularLocation>
    <subcellularLocation>
        <location evidence="1">Cell inner membrane</location>
        <topology evidence="1">Peripheral membrane protein</topology>
    </subcellularLocation>
</comment>
<comment type="similarity">
    <text evidence="1 2">Belongs to the TRAFAC class TrmE-Era-EngA-EngB-Septin-like GTPase superfamily. Era GTPase family.</text>
</comment>
<proteinExistence type="inferred from homology"/>
<evidence type="ECO:0000255" key="1">
    <source>
        <dbReference type="HAMAP-Rule" id="MF_00367"/>
    </source>
</evidence>
<evidence type="ECO:0000255" key="2">
    <source>
        <dbReference type="PROSITE-ProRule" id="PRU01050"/>
    </source>
</evidence>
<sequence length="295" mass="33831">MKPTYCGYAAIIGRPNVGKSTLLNQLLGQKISITSRKPQTTRYQILGVKTFKDIQVIYVDTPGLHASTERTINRYMNRTARGALRDVDAIVFVIEPHWESQDAWVLDNLKEIETPVFLVINKVDKIKNRAELLPLIEKVSSLYAFQKITPLSAKTGDQVGTLEQAVHQLMPESPFYFPPEQVTDRSDQFMASEIIREKLMRLLGQEIPYSLAVTLIEFRKEEKIIRISAVIWVEKKSQKGIVIGKGGERLKRVGTNARLDMEKWFGKRVFLQLWVKVKSGWADNERLLRELGFEE</sequence>